<organism>
    <name type="scientific">Gallus gallus</name>
    <name type="common">Chicken</name>
    <dbReference type="NCBI Taxonomy" id="9031"/>
    <lineage>
        <taxon>Eukaryota</taxon>
        <taxon>Metazoa</taxon>
        <taxon>Chordata</taxon>
        <taxon>Craniata</taxon>
        <taxon>Vertebrata</taxon>
        <taxon>Euteleostomi</taxon>
        <taxon>Archelosauria</taxon>
        <taxon>Archosauria</taxon>
        <taxon>Dinosauria</taxon>
        <taxon>Saurischia</taxon>
        <taxon>Theropoda</taxon>
        <taxon>Coelurosauria</taxon>
        <taxon>Aves</taxon>
        <taxon>Neognathae</taxon>
        <taxon>Galloanserae</taxon>
        <taxon>Galliformes</taxon>
        <taxon>Phasianidae</taxon>
        <taxon>Phasianinae</taxon>
        <taxon>Gallus</taxon>
    </lineage>
</organism>
<dbReference type="EMBL" id="AJ428876">
    <property type="protein sequence ID" value="CAD21839.1"/>
    <property type="molecule type" value="mRNA"/>
</dbReference>
<dbReference type="SMR" id="Q710A0"/>
<dbReference type="FunCoup" id="Q710A0">
    <property type="interactions" value="6"/>
</dbReference>
<dbReference type="STRING" id="9031.ENSGALP00000044476"/>
<dbReference type="PaxDb" id="9031-ENSGALP00000039012"/>
<dbReference type="VEuPathDB" id="HostDB:geneid_396080"/>
<dbReference type="eggNOG" id="ENOG502S7TB">
    <property type="taxonomic scope" value="Eukaryota"/>
</dbReference>
<dbReference type="InParanoid" id="Q710A0"/>
<dbReference type="OrthoDB" id="9944258at2759"/>
<dbReference type="PhylomeDB" id="Q710A0"/>
<dbReference type="Proteomes" id="UP000000539">
    <property type="component" value="Unassembled WGS sequence"/>
</dbReference>
<dbReference type="GO" id="GO:0005576">
    <property type="term" value="C:extracellular region"/>
    <property type="evidence" value="ECO:0007669"/>
    <property type="project" value="UniProtKB-SubCell"/>
</dbReference>
<dbReference type="GO" id="GO:0046849">
    <property type="term" value="P:bone remodeling"/>
    <property type="evidence" value="ECO:0007669"/>
    <property type="project" value="InterPro"/>
</dbReference>
<dbReference type="Gene3D" id="3.10.450.10">
    <property type="match status" value="1"/>
</dbReference>
<dbReference type="InterPro" id="IPR046350">
    <property type="entry name" value="Cystatin_sf"/>
</dbReference>
<dbReference type="InterPro" id="IPR010892">
    <property type="entry name" value="Spp-24"/>
</dbReference>
<dbReference type="PANTHER" id="PTHR15444">
    <property type="entry name" value="SECRETED PHOSPHOPROTEIN 24"/>
    <property type="match status" value="1"/>
</dbReference>
<dbReference type="PANTHER" id="PTHR15444:SF4">
    <property type="entry name" value="SECRETED PHOSPHOPROTEIN 24"/>
    <property type="match status" value="1"/>
</dbReference>
<dbReference type="Pfam" id="PF07448">
    <property type="entry name" value="Spp-24"/>
    <property type="match status" value="1"/>
</dbReference>
<dbReference type="SUPFAM" id="SSF54403">
    <property type="entry name" value="Cystatin/monellin"/>
    <property type="match status" value="1"/>
</dbReference>
<keyword id="KW-1015">Disulfide bond</keyword>
<keyword id="KW-0597">Phosphoprotein</keyword>
<keyword id="KW-1185">Reference proteome</keyword>
<keyword id="KW-0964">Secreted</keyword>
<keyword id="KW-0732">Signal</keyword>
<feature type="signal peptide" evidence="2">
    <location>
        <begin position="1"/>
        <end position="29"/>
    </location>
</feature>
<feature type="chain" id="PRO_0000228611" description="Secreted phosphoprotein 24">
    <location>
        <begin position="30"/>
        <end position="192"/>
    </location>
</feature>
<feature type="region of interest" description="Disordered" evidence="3">
    <location>
        <begin position="155"/>
        <end position="192"/>
    </location>
</feature>
<feature type="disulfide bond" evidence="1">
    <location>
        <begin position="92"/>
        <end position="103"/>
    </location>
</feature>
<feature type="disulfide bond" evidence="1">
    <location>
        <begin position="116"/>
        <end position="134"/>
    </location>
</feature>
<sequence>MGKTPEDFERHTMRSLIFVLALSVFTCSGFPVYDYELPVTEEALNASIARINSQTWGPNLYGVVRSHVRHVDMWNSNDYRLELQLSIRETECTKASGRDPFTCGFKVGPFVPTAVCKSVVEVSSEQIVNVIVRCHQSTFSSESMSSEEMTYMLMTDPRKRGSSRSEAFSSRGRGHSNGDWRKPDYTSPGKVE</sequence>
<gene>
    <name type="primary">SPP2</name>
    <name type="synonym">SPP24</name>
</gene>
<comment type="function">
    <text evidence="1">Could coordinate an aspect of bone turnover.</text>
</comment>
<comment type="subcellular location">
    <subcellularLocation>
        <location evidence="1">Secreted</location>
    </subcellularLocation>
</comment>
<comment type="PTM">
    <text evidence="1">Multiply phosphorylated at serine residues.</text>
</comment>
<comment type="similarity">
    <text evidence="4">Belongs to the SPP2 family.</text>
</comment>
<protein>
    <recommendedName>
        <fullName>Secreted phosphoprotein 24</fullName>
        <shortName>Spp-24</shortName>
    </recommendedName>
    <alternativeName>
        <fullName>Secreted phosphoprotein 2</fullName>
    </alternativeName>
</protein>
<evidence type="ECO:0000250" key="1"/>
<evidence type="ECO:0000255" key="2"/>
<evidence type="ECO:0000256" key="3">
    <source>
        <dbReference type="SAM" id="MobiDB-lite"/>
    </source>
</evidence>
<evidence type="ECO:0000305" key="4"/>
<accession>Q710A0</accession>
<proteinExistence type="evidence at transcript level"/>
<name>SPP24_CHICK</name>
<reference key="1">
    <citation type="journal article" date="2004" name="Matrix Biol.">
        <title>Characterization of the human secreted phosphoprotein 24 gene (SPP2) and comparison of the protein sequence in nine species.</title>
        <authorList>
            <person name="Bennett C.S."/>
            <person name="Khorram Khorshid H.R."/>
            <person name="Kitchen J.A."/>
            <person name="Arteta D."/>
            <person name="Dalgleish R."/>
        </authorList>
    </citation>
    <scope>NUCLEOTIDE SEQUENCE [MRNA]</scope>
</reference>